<dbReference type="EMBL" id="CP000103">
    <property type="protein sequence ID" value="ABB75380.1"/>
    <property type="molecule type" value="Genomic_DNA"/>
</dbReference>
<dbReference type="RefSeq" id="WP_011381391.1">
    <property type="nucleotide sequence ID" value="NC_007614.1"/>
</dbReference>
<dbReference type="SMR" id="Q2Y791"/>
<dbReference type="STRING" id="323848.Nmul_A2086"/>
<dbReference type="KEGG" id="nmu:Nmul_A2086"/>
<dbReference type="eggNOG" id="COG0254">
    <property type="taxonomic scope" value="Bacteria"/>
</dbReference>
<dbReference type="HOGENOM" id="CLU_114306_4_0_4"/>
<dbReference type="OrthoDB" id="9803251at2"/>
<dbReference type="Proteomes" id="UP000002718">
    <property type="component" value="Chromosome"/>
</dbReference>
<dbReference type="GO" id="GO:1990904">
    <property type="term" value="C:ribonucleoprotein complex"/>
    <property type="evidence" value="ECO:0007669"/>
    <property type="project" value="UniProtKB-KW"/>
</dbReference>
<dbReference type="GO" id="GO:0005840">
    <property type="term" value="C:ribosome"/>
    <property type="evidence" value="ECO:0007669"/>
    <property type="project" value="UniProtKB-KW"/>
</dbReference>
<dbReference type="GO" id="GO:0046872">
    <property type="term" value="F:metal ion binding"/>
    <property type="evidence" value="ECO:0007669"/>
    <property type="project" value="UniProtKB-KW"/>
</dbReference>
<dbReference type="GO" id="GO:0019843">
    <property type="term" value="F:rRNA binding"/>
    <property type="evidence" value="ECO:0007669"/>
    <property type="project" value="UniProtKB-KW"/>
</dbReference>
<dbReference type="GO" id="GO:0003735">
    <property type="term" value="F:structural constituent of ribosome"/>
    <property type="evidence" value="ECO:0007669"/>
    <property type="project" value="InterPro"/>
</dbReference>
<dbReference type="GO" id="GO:0006412">
    <property type="term" value="P:translation"/>
    <property type="evidence" value="ECO:0007669"/>
    <property type="project" value="UniProtKB-UniRule"/>
</dbReference>
<dbReference type="Gene3D" id="4.10.830.30">
    <property type="entry name" value="Ribosomal protein L31"/>
    <property type="match status" value="1"/>
</dbReference>
<dbReference type="HAMAP" id="MF_00501">
    <property type="entry name" value="Ribosomal_bL31_1"/>
    <property type="match status" value="1"/>
</dbReference>
<dbReference type="InterPro" id="IPR034704">
    <property type="entry name" value="Ribosomal_bL28/bL31-like_sf"/>
</dbReference>
<dbReference type="InterPro" id="IPR002150">
    <property type="entry name" value="Ribosomal_bL31"/>
</dbReference>
<dbReference type="InterPro" id="IPR027491">
    <property type="entry name" value="Ribosomal_bL31_A"/>
</dbReference>
<dbReference type="InterPro" id="IPR042105">
    <property type="entry name" value="Ribosomal_bL31_sf"/>
</dbReference>
<dbReference type="NCBIfam" id="TIGR00105">
    <property type="entry name" value="L31"/>
    <property type="match status" value="1"/>
</dbReference>
<dbReference type="NCBIfam" id="NF000612">
    <property type="entry name" value="PRK00019.1"/>
    <property type="match status" value="1"/>
</dbReference>
<dbReference type="NCBIfam" id="NF001809">
    <property type="entry name" value="PRK00528.1"/>
    <property type="match status" value="1"/>
</dbReference>
<dbReference type="PANTHER" id="PTHR33280">
    <property type="entry name" value="50S RIBOSOMAL PROTEIN L31, CHLOROPLASTIC"/>
    <property type="match status" value="1"/>
</dbReference>
<dbReference type="PANTHER" id="PTHR33280:SF6">
    <property type="entry name" value="LARGE RIBOSOMAL SUBUNIT PROTEIN BL31A"/>
    <property type="match status" value="1"/>
</dbReference>
<dbReference type="Pfam" id="PF01197">
    <property type="entry name" value="Ribosomal_L31"/>
    <property type="match status" value="1"/>
</dbReference>
<dbReference type="PRINTS" id="PR01249">
    <property type="entry name" value="RIBOSOMALL31"/>
</dbReference>
<dbReference type="SUPFAM" id="SSF143800">
    <property type="entry name" value="L28p-like"/>
    <property type="match status" value="1"/>
</dbReference>
<dbReference type="PROSITE" id="PS01143">
    <property type="entry name" value="RIBOSOMAL_L31"/>
    <property type="match status" value="1"/>
</dbReference>
<organism>
    <name type="scientific">Nitrosospira multiformis (strain ATCC 25196 / NCIMB 11849 / C 71)</name>
    <dbReference type="NCBI Taxonomy" id="323848"/>
    <lineage>
        <taxon>Bacteria</taxon>
        <taxon>Pseudomonadati</taxon>
        <taxon>Pseudomonadota</taxon>
        <taxon>Betaproteobacteria</taxon>
        <taxon>Nitrosomonadales</taxon>
        <taxon>Nitrosomonadaceae</taxon>
        <taxon>Nitrosospira</taxon>
    </lineage>
</organism>
<comment type="function">
    <text evidence="1">Binds the 23S rRNA.</text>
</comment>
<comment type="cofactor">
    <cofactor evidence="1">
        <name>Zn(2+)</name>
        <dbReference type="ChEBI" id="CHEBI:29105"/>
    </cofactor>
    <text evidence="1">Binds 1 zinc ion per subunit.</text>
</comment>
<comment type="subunit">
    <text evidence="1">Part of the 50S ribosomal subunit.</text>
</comment>
<comment type="similarity">
    <text evidence="1">Belongs to the bacterial ribosomal protein bL31 family. Type A subfamily.</text>
</comment>
<sequence>MKPDIHPDYQEITVTCSCGSTFQTRSTMGKPLHIEVCSVCHPFYTGKQKIVDTAGRVEKFRQKYGKKVEKQPAAG</sequence>
<proteinExistence type="inferred from homology"/>
<feature type="chain" id="PRO_0000259202" description="Large ribosomal subunit protein bL31">
    <location>
        <begin position="1"/>
        <end position="75"/>
    </location>
</feature>
<feature type="binding site" evidence="1">
    <location>
        <position position="16"/>
    </location>
    <ligand>
        <name>Zn(2+)</name>
        <dbReference type="ChEBI" id="CHEBI:29105"/>
    </ligand>
</feature>
<feature type="binding site" evidence="1">
    <location>
        <position position="18"/>
    </location>
    <ligand>
        <name>Zn(2+)</name>
        <dbReference type="ChEBI" id="CHEBI:29105"/>
    </ligand>
</feature>
<feature type="binding site" evidence="1">
    <location>
        <position position="37"/>
    </location>
    <ligand>
        <name>Zn(2+)</name>
        <dbReference type="ChEBI" id="CHEBI:29105"/>
    </ligand>
</feature>
<feature type="binding site" evidence="1">
    <location>
        <position position="40"/>
    </location>
    <ligand>
        <name>Zn(2+)</name>
        <dbReference type="ChEBI" id="CHEBI:29105"/>
    </ligand>
</feature>
<reference key="1">
    <citation type="submission" date="2005-08" db="EMBL/GenBank/DDBJ databases">
        <title>Complete sequence of chromosome 1 of Nitrosospira multiformis ATCC 25196.</title>
        <authorList>
            <person name="Copeland A."/>
            <person name="Lucas S."/>
            <person name="Lapidus A."/>
            <person name="Barry K."/>
            <person name="Detter J.C."/>
            <person name="Glavina T."/>
            <person name="Hammon N."/>
            <person name="Israni S."/>
            <person name="Pitluck S."/>
            <person name="Chain P."/>
            <person name="Malfatti S."/>
            <person name="Shin M."/>
            <person name="Vergez L."/>
            <person name="Schmutz J."/>
            <person name="Larimer F."/>
            <person name="Land M."/>
            <person name="Hauser L."/>
            <person name="Kyrpides N."/>
            <person name="Lykidis A."/>
            <person name="Richardson P."/>
        </authorList>
    </citation>
    <scope>NUCLEOTIDE SEQUENCE [LARGE SCALE GENOMIC DNA]</scope>
    <source>
        <strain>ATCC 25196 / NCIMB 11849 / C 71</strain>
    </source>
</reference>
<evidence type="ECO:0000255" key="1">
    <source>
        <dbReference type="HAMAP-Rule" id="MF_00501"/>
    </source>
</evidence>
<evidence type="ECO:0000305" key="2"/>
<name>RL31_NITMU</name>
<keyword id="KW-0479">Metal-binding</keyword>
<keyword id="KW-1185">Reference proteome</keyword>
<keyword id="KW-0687">Ribonucleoprotein</keyword>
<keyword id="KW-0689">Ribosomal protein</keyword>
<keyword id="KW-0694">RNA-binding</keyword>
<keyword id="KW-0699">rRNA-binding</keyword>
<keyword id="KW-0862">Zinc</keyword>
<gene>
    <name evidence="1" type="primary">rpmE</name>
    <name type="ordered locus">Nmul_A2086</name>
</gene>
<protein>
    <recommendedName>
        <fullName evidence="1">Large ribosomal subunit protein bL31</fullName>
    </recommendedName>
    <alternativeName>
        <fullName evidence="2">50S ribosomal protein L31</fullName>
    </alternativeName>
</protein>
<accession>Q2Y791</accession>